<sequence length="247" mass="27205">MSQVNMRDMLKAGCHFGHQTRYWNPKMGKYIFGARNKIHIINLEKTLPMFNEALTFVERLASGKNKILFVGTKRSAGKIVAEEAARCGSPYVDHRWLGGMLTNFKTIRQSIKRLRELEVQAEDGTFAKLTKKEALMRTRDLEKLDRSLGGIKDMGGLPDALFVIDVDHERIAITEANKLGIPVIGVVDTNSSPEGVDYIIPGNDDAIRAIQLYMGSMADAVIRGRNNVAGGTDVFVEEAPAAAAVEG</sequence>
<keyword id="KW-0687">Ribonucleoprotein</keyword>
<keyword id="KW-0689">Ribosomal protein</keyword>
<comment type="similarity">
    <text evidence="1">Belongs to the universal ribosomal protein uS2 family.</text>
</comment>
<proteinExistence type="inferred from homology"/>
<evidence type="ECO:0000255" key="1">
    <source>
        <dbReference type="HAMAP-Rule" id="MF_00291"/>
    </source>
</evidence>
<evidence type="ECO:0000305" key="2"/>
<reference key="1">
    <citation type="journal article" date="2005" name="Proc. Natl. Acad. Sci. U.S.A.">
        <title>Comparison of the complete genome sequences of Pseudomonas syringae pv. syringae B728a and pv. tomato DC3000.</title>
        <authorList>
            <person name="Feil H."/>
            <person name="Feil W.S."/>
            <person name="Chain P."/>
            <person name="Larimer F."/>
            <person name="Dibartolo G."/>
            <person name="Copeland A."/>
            <person name="Lykidis A."/>
            <person name="Trong S."/>
            <person name="Nolan M."/>
            <person name="Goltsman E."/>
            <person name="Thiel J."/>
            <person name="Malfatti S."/>
            <person name="Loper J.E."/>
            <person name="Lapidus A."/>
            <person name="Detter J.C."/>
            <person name="Land M."/>
            <person name="Richardson P.M."/>
            <person name="Kyrpides N.C."/>
            <person name="Ivanova N."/>
            <person name="Lindow S.E."/>
        </authorList>
    </citation>
    <scope>NUCLEOTIDE SEQUENCE [LARGE SCALE GENOMIC DNA]</scope>
    <source>
        <strain>B728a</strain>
    </source>
</reference>
<name>RS2_PSEU2</name>
<protein>
    <recommendedName>
        <fullName evidence="1">Small ribosomal subunit protein uS2</fullName>
    </recommendedName>
    <alternativeName>
        <fullName evidence="2">30S ribosomal protein S2</fullName>
    </alternativeName>
</protein>
<dbReference type="EMBL" id="CP000075">
    <property type="protein sequence ID" value="AAY36394.1"/>
    <property type="molecule type" value="Genomic_DNA"/>
</dbReference>
<dbReference type="RefSeq" id="WP_003314293.1">
    <property type="nucleotide sequence ID" value="NC_007005.1"/>
</dbReference>
<dbReference type="RefSeq" id="YP_234432.1">
    <property type="nucleotide sequence ID" value="NC_007005.1"/>
</dbReference>
<dbReference type="SMR" id="Q4ZWS8"/>
<dbReference type="STRING" id="205918.Psyr_1343"/>
<dbReference type="GeneID" id="77277299"/>
<dbReference type="KEGG" id="psb:Psyr_1343"/>
<dbReference type="PATRIC" id="fig|205918.7.peg.1376"/>
<dbReference type="eggNOG" id="COG0052">
    <property type="taxonomic scope" value="Bacteria"/>
</dbReference>
<dbReference type="HOGENOM" id="CLU_040318_1_2_6"/>
<dbReference type="OrthoDB" id="9808036at2"/>
<dbReference type="Proteomes" id="UP000000426">
    <property type="component" value="Chromosome"/>
</dbReference>
<dbReference type="GO" id="GO:0022627">
    <property type="term" value="C:cytosolic small ribosomal subunit"/>
    <property type="evidence" value="ECO:0007669"/>
    <property type="project" value="TreeGrafter"/>
</dbReference>
<dbReference type="GO" id="GO:0003735">
    <property type="term" value="F:structural constituent of ribosome"/>
    <property type="evidence" value="ECO:0007669"/>
    <property type="project" value="InterPro"/>
</dbReference>
<dbReference type="GO" id="GO:0006412">
    <property type="term" value="P:translation"/>
    <property type="evidence" value="ECO:0007669"/>
    <property type="project" value="UniProtKB-UniRule"/>
</dbReference>
<dbReference type="CDD" id="cd01425">
    <property type="entry name" value="RPS2"/>
    <property type="match status" value="1"/>
</dbReference>
<dbReference type="FunFam" id="1.10.287.610:FF:000001">
    <property type="entry name" value="30S ribosomal protein S2"/>
    <property type="match status" value="1"/>
</dbReference>
<dbReference type="Gene3D" id="3.40.50.10490">
    <property type="entry name" value="Glucose-6-phosphate isomerase like protein, domain 1"/>
    <property type="match status" value="1"/>
</dbReference>
<dbReference type="Gene3D" id="1.10.287.610">
    <property type="entry name" value="Helix hairpin bin"/>
    <property type="match status" value="1"/>
</dbReference>
<dbReference type="HAMAP" id="MF_00291_B">
    <property type="entry name" value="Ribosomal_uS2_B"/>
    <property type="match status" value="1"/>
</dbReference>
<dbReference type="InterPro" id="IPR001865">
    <property type="entry name" value="Ribosomal_uS2"/>
</dbReference>
<dbReference type="InterPro" id="IPR005706">
    <property type="entry name" value="Ribosomal_uS2_bac/mit/plastid"/>
</dbReference>
<dbReference type="InterPro" id="IPR018130">
    <property type="entry name" value="Ribosomal_uS2_CS"/>
</dbReference>
<dbReference type="InterPro" id="IPR023591">
    <property type="entry name" value="Ribosomal_uS2_flav_dom_sf"/>
</dbReference>
<dbReference type="NCBIfam" id="TIGR01011">
    <property type="entry name" value="rpsB_bact"/>
    <property type="match status" value="1"/>
</dbReference>
<dbReference type="PANTHER" id="PTHR12534">
    <property type="entry name" value="30S RIBOSOMAL PROTEIN S2 PROKARYOTIC AND ORGANELLAR"/>
    <property type="match status" value="1"/>
</dbReference>
<dbReference type="PANTHER" id="PTHR12534:SF0">
    <property type="entry name" value="SMALL RIBOSOMAL SUBUNIT PROTEIN US2M"/>
    <property type="match status" value="1"/>
</dbReference>
<dbReference type="Pfam" id="PF00318">
    <property type="entry name" value="Ribosomal_S2"/>
    <property type="match status" value="1"/>
</dbReference>
<dbReference type="PRINTS" id="PR00395">
    <property type="entry name" value="RIBOSOMALS2"/>
</dbReference>
<dbReference type="SUPFAM" id="SSF52313">
    <property type="entry name" value="Ribosomal protein S2"/>
    <property type="match status" value="1"/>
</dbReference>
<dbReference type="PROSITE" id="PS00963">
    <property type="entry name" value="RIBOSOMAL_S2_2"/>
    <property type="match status" value="1"/>
</dbReference>
<accession>Q4ZWS8</accession>
<organism>
    <name type="scientific">Pseudomonas syringae pv. syringae (strain B728a)</name>
    <dbReference type="NCBI Taxonomy" id="205918"/>
    <lineage>
        <taxon>Bacteria</taxon>
        <taxon>Pseudomonadati</taxon>
        <taxon>Pseudomonadota</taxon>
        <taxon>Gammaproteobacteria</taxon>
        <taxon>Pseudomonadales</taxon>
        <taxon>Pseudomonadaceae</taxon>
        <taxon>Pseudomonas</taxon>
        <taxon>Pseudomonas syringae</taxon>
    </lineage>
</organism>
<gene>
    <name evidence="1" type="primary">rpsB</name>
    <name type="ordered locus">Psyr_1343</name>
</gene>
<feature type="chain" id="PRO_1000004037" description="Small ribosomal subunit protein uS2">
    <location>
        <begin position="1"/>
        <end position="247"/>
    </location>
</feature>